<accession>Q7JUR5</accession>
<comment type="function">
    <text evidence="1">May be involved in transcriptional regulation.</text>
</comment>
<comment type="subcellular location">
    <subcellularLocation>
        <location evidence="1">Nucleus</location>
    </subcellularLocation>
</comment>
<proteinExistence type="evidence at protein level"/>
<dbReference type="EMBL" id="AE013599">
    <property type="protein sequence ID" value="AAF58881.1"/>
    <property type="molecule type" value="Genomic_DNA"/>
</dbReference>
<dbReference type="EMBL" id="AY122089">
    <property type="protein sequence ID" value="AAM52601.1"/>
    <property type="molecule type" value="mRNA"/>
</dbReference>
<dbReference type="RefSeq" id="NP_610530.1">
    <property type="nucleotide sequence ID" value="NM_136686.5"/>
</dbReference>
<dbReference type="RefSeq" id="NP_724850.1">
    <property type="nucleotide sequence ID" value="NM_165717.3"/>
</dbReference>
<dbReference type="SMR" id="Q7JUR5"/>
<dbReference type="BioGRID" id="61852">
    <property type="interactions" value="4"/>
</dbReference>
<dbReference type="IntAct" id="Q7JUR5">
    <property type="interactions" value="2"/>
</dbReference>
<dbReference type="STRING" id="7227.FBpp0087466"/>
<dbReference type="iPTMnet" id="Q7JUR5"/>
<dbReference type="PaxDb" id="7227-FBpp0087465"/>
<dbReference type="DNASU" id="36024"/>
<dbReference type="EnsemblMetazoa" id="FBtr0088377">
    <property type="protein sequence ID" value="FBpp0087465"/>
    <property type="gene ID" value="FBgn0033459"/>
</dbReference>
<dbReference type="EnsemblMetazoa" id="FBtr0088378">
    <property type="protein sequence ID" value="FBpp0087466"/>
    <property type="gene ID" value="FBgn0033459"/>
</dbReference>
<dbReference type="GeneID" id="36024"/>
<dbReference type="KEGG" id="dme:Dmel_CG12744"/>
<dbReference type="UCSC" id="CG12744-RA">
    <property type="organism name" value="d. melanogaster"/>
</dbReference>
<dbReference type="AGR" id="FB:FBgn0033459"/>
<dbReference type="FlyBase" id="FBgn0033459">
    <property type="gene designation" value="CG12744"/>
</dbReference>
<dbReference type="VEuPathDB" id="VectorBase:FBgn0033459"/>
<dbReference type="eggNOG" id="KOG1721">
    <property type="taxonomic scope" value="Eukaryota"/>
</dbReference>
<dbReference type="HOGENOM" id="CLU_1653981_0_0_1"/>
<dbReference type="InParanoid" id="Q7JUR5"/>
<dbReference type="OMA" id="HQHYKRF"/>
<dbReference type="OrthoDB" id="8922241at2759"/>
<dbReference type="PhylomeDB" id="Q7JUR5"/>
<dbReference type="BioGRID-ORCS" id="36024">
    <property type="hits" value="1 hit in 1 CRISPR screen"/>
</dbReference>
<dbReference type="GenomeRNAi" id="36024"/>
<dbReference type="PRO" id="PR:Q7JUR5"/>
<dbReference type="Proteomes" id="UP000000803">
    <property type="component" value="Chromosome 2R"/>
</dbReference>
<dbReference type="Bgee" id="FBgn0033459">
    <property type="expression patterns" value="Expressed in germline cell (Drosophila) in post-embryonic organism and 48 other cell types or tissues"/>
</dbReference>
<dbReference type="ExpressionAtlas" id="Q7JUR5">
    <property type="expression patterns" value="baseline and differential"/>
</dbReference>
<dbReference type="GO" id="GO:0005634">
    <property type="term" value="C:nucleus"/>
    <property type="evidence" value="ECO:0007669"/>
    <property type="project" value="UniProtKB-SubCell"/>
</dbReference>
<dbReference type="GO" id="GO:0003677">
    <property type="term" value="F:DNA binding"/>
    <property type="evidence" value="ECO:0007669"/>
    <property type="project" value="UniProtKB-KW"/>
</dbReference>
<dbReference type="GO" id="GO:0008270">
    <property type="term" value="F:zinc ion binding"/>
    <property type="evidence" value="ECO:0007669"/>
    <property type="project" value="UniProtKB-KW"/>
</dbReference>
<dbReference type="Gene3D" id="3.30.160.60">
    <property type="entry name" value="Classic Zinc Finger"/>
    <property type="match status" value="1"/>
</dbReference>
<dbReference type="InterPro" id="IPR050888">
    <property type="entry name" value="ZnF_C2H2-type_TF"/>
</dbReference>
<dbReference type="InterPro" id="IPR036236">
    <property type="entry name" value="Znf_C2H2_sf"/>
</dbReference>
<dbReference type="InterPro" id="IPR013087">
    <property type="entry name" value="Znf_C2H2_type"/>
</dbReference>
<dbReference type="PANTHER" id="PTHR24406">
    <property type="entry name" value="TRANSCRIPTIONAL REPRESSOR CTCFL-RELATED"/>
    <property type="match status" value="1"/>
</dbReference>
<dbReference type="Pfam" id="PF00096">
    <property type="entry name" value="zf-C2H2"/>
    <property type="match status" value="1"/>
</dbReference>
<dbReference type="SMART" id="SM00355">
    <property type="entry name" value="ZnF_C2H2"/>
    <property type="match status" value="3"/>
</dbReference>
<dbReference type="SUPFAM" id="SSF57667">
    <property type="entry name" value="beta-beta-alpha zinc fingers"/>
    <property type="match status" value="1"/>
</dbReference>
<dbReference type="PROSITE" id="PS00028">
    <property type="entry name" value="ZINC_FINGER_C2H2_1"/>
    <property type="match status" value="3"/>
</dbReference>
<dbReference type="PROSITE" id="PS50157">
    <property type="entry name" value="ZINC_FINGER_C2H2_2"/>
    <property type="match status" value="2"/>
</dbReference>
<gene>
    <name type="ORF">CG12744</name>
</gene>
<protein>
    <recommendedName>
        <fullName>Uncharacterized zinc finger protein CG12744</fullName>
    </recommendedName>
</protein>
<name>Y2744_DROME</name>
<sequence>METALAEVQLSCLLCEQTFDATEKLDEHLPTHFPQPVSTGQTCDICGRTMRSSLELHQHYKRYHEAHVPNTEGHFQCQLCDKVFLLQDHLKVHVKIEHATDGYQPDEKSLDWQHYSPRSLDTTNDYKLDPILCPPPKRKYPPRSPFFNPNLWLGADNCFM</sequence>
<feature type="chain" id="PRO_0000355633" description="Uncharacterized zinc finger protein CG12744">
    <location>
        <begin position="1"/>
        <end position="160"/>
    </location>
</feature>
<feature type="zinc finger region" description="C2H2-type 1" evidence="2">
    <location>
        <begin position="10"/>
        <end position="32"/>
    </location>
</feature>
<feature type="zinc finger region" description="C2H2-type 2" evidence="2">
    <location>
        <begin position="41"/>
        <end position="64"/>
    </location>
</feature>
<feature type="zinc finger region" description="C2H2-type 3" evidence="2">
    <location>
        <begin position="75"/>
        <end position="98"/>
    </location>
</feature>
<feature type="modified residue" description="Phosphotyrosine" evidence="3">
    <location>
        <position position="115"/>
    </location>
</feature>
<feature type="modified residue" description="Phosphoserine" evidence="3">
    <location>
        <position position="116"/>
    </location>
</feature>
<reference key="1">
    <citation type="journal article" date="2000" name="Science">
        <title>The genome sequence of Drosophila melanogaster.</title>
        <authorList>
            <person name="Adams M.D."/>
            <person name="Celniker S.E."/>
            <person name="Holt R.A."/>
            <person name="Evans C.A."/>
            <person name="Gocayne J.D."/>
            <person name="Amanatides P.G."/>
            <person name="Scherer S.E."/>
            <person name="Li P.W."/>
            <person name="Hoskins R.A."/>
            <person name="Galle R.F."/>
            <person name="George R.A."/>
            <person name="Lewis S.E."/>
            <person name="Richards S."/>
            <person name="Ashburner M."/>
            <person name="Henderson S.N."/>
            <person name="Sutton G.G."/>
            <person name="Wortman J.R."/>
            <person name="Yandell M.D."/>
            <person name="Zhang Q."/>
            <person name="Chen L.X."/>
            <person name="Brandon R.C."/>
            <person name="Rogers Y.-H.C."/>
            <person name="Blazej R.G."/>
            <person name="Champe M."/>
            <person name="Pfeiffer B.D."/>
            <person name="Wan K.H."/>
            <person name="Doyle C."/>
            <person name="Baxter E.G."/>
            <person name="Helt G."/>
            <person name="Nelson C.R."/>
            <person name="Miklos G.L.G."/>
            <person name="Abril J.F."/>
            <person name="Agbayani A."/>
            <person name="An H.-J."/>
            <person name="Andrews-Pfannkoch C."/>
            <person name="Baldwin D."/>
            <person name="Ballew R.M."/>
            <person name="Basu A."/>
            <person name="Baxendale J."/>
            <person name="Bayraktaroglu L."/>
            <person name="Beasley E.M."/>
            <person name="Beeson K.Y."/>
            <person name="Benos P.V."/>
            <person name="Berman B.P."/>
            <person name="Bhandari D."/>
            <person name="Bolshakov S."/>
            <person name="Borkova D."/>
            <person name="Botchan M.R."/>
            <person name="Bouck J."/>
            <person name="Brokstein P."/>
            <person name="Brottier P."/>
            <person name="Burtis K.C."/>
            <person name="Busam D.A."/>
            <person name="Butler H."/>
            <person name="Cadieu E."/>
            <person name="Center A."/>
            <person name="Chandra I."/>
            <person name="Cherry J.M."/>
            <person name="Cawley S."/>
            <person name="Dahlke C."/>
            <person name="Davenport L.B."/>
            <person name="Davies P."/>
            <person name="de Pablos B."/>
            <person name="Delcher A."/>
            <person name="Deng Z."/>
            <person name="Mays A.D."/>
            <person name="Dew I."/>
            <person name="Dietz S.M."/>
            <person name="Dodson K."/>
            <person name="Doup L.E."/>
            <person name="Downes M."/>
            <person name="Dugan-Rocha S."/>
            <person name="Dunkov B.C."/>
            <person name="Dunn P."/>
            <person name="Durbin K.J."/>
            <person name="Evangelista C.C."/>
            <person name="Ferraz C."/>
            <person name="Ferriera S."/>
            <person name="Fleischmann W."/>
            <person name="Fosler C."/>
            <person name="Gabrielian A.E."/>
            <person name="Garg N.S."/>
            <person name="Gelbart W.M."/>
            <person name="Glasser K."/>
            <person name="Glodek A."/>
            <person name="Gong F."/>
            <person name="Gorrell J.H."/>
            <person name="Gu Z."/>
            <person name="Guan P."/>
            <person name="Harris M."/>
            <person name="Harris N.L."/>
            <person name="Harvey D.A."/>
            <person name="Heiman T.J."/>
            <person name="Hernandez J.R."/>
            <person name="Houck J."/>
            <person name="Hostin D."/>
            <person name="Houston K.A."/>
            <person name="Howland T.J."/>
            <person name="Wei M.-H."/>
            <person name="Ibegwam C."/>
            <person name="Jalali M."/>
            <person name="Kalush F."/>
            <person name="Karpen G.H."/>
            <person name="Ke Z."/>
            <person name="Kennison J.A."/>
            <person name="Ketchum K.A."/>
            <person name="Kimmel B.E."/>
            <person name="Kodira C.D."/>
            <person name="Kraft C.L."/>
            <person name="Kravitz S."/>
            <person name="Kulp D."/>
            <person name="Lai Z."/>
            <person name="Lasko P."/>
            <person name="Lei Y."/>
            <person name="Levitsky A.A."/>
            <person name="Li J.H."/>
            <person name="Li Z."/>
            <person name="Liang Y."/>
            <person name="Lin X."/>
            <person name="Liu X."/>
            <person name="Mattei B."/>
            <person name="McIntosh T.C."/>
            <person name="McLeod M.P."/>
            <person name="McPherson D."/>
            <person name="Merkulov G."/>
            <person name="Milshina N.V."/>
            <person name="Mobarry C."/>
            <person name="Morris J."/>
            <person name="Moshrefi A."/>
            <person name="Mount S.M."/>
            <person name="Moy M."/>
            <person name="Murphy B."/>
            <person name="Murphy L."/>
            <person name="Muzny D.M."/>
            <person name="Nelson D.L."/>
            <person name="Nelson D.R."/>
            <person name="Nelson K.A."/>
            <person name="Nixon K."/>
            <person name="Nusskern D.R."/>
            <person name="Pacleb J.M."/>
            <person name="Palazzolo M."/>
            <person name="Pittman G.S."/>
            <person name="Pan S."/>
            <person name="Pollard J."/>
            <person name="Puri V."/>
            <person name="Reese M.G."/>
            <person name="Reinert K."/>
            <person name="Remington K."/>
            <person name="Saunders R.D.C."/>
            <person name="Scheeler F."/>
            <person name="Shen H."/>
            <person name="Shue B.C."/>
            <person name="Siden-Kiamos I."/>
            <person name="Simpson M."/>
            <person name="Skupski M.P."/>
            <person name="Smith T.J."/>
            <person name="Spier E."/>
            <person name="Spradling A.C."/>
            <person name="Stapleton M."/>
            <person name="Strong R."/>
            <person name="Sun E."/>
            <person name="Svirskas R."/>
            <person name="Tector C."/>
            <person name="Turner R."/>
            <person name="Venter E."/>
            <person name="Wang A.H."/>
            <person name="Wang X."/>
            <person name="Wang Z.-Y."/>
            <person name="Wassarman D.A."/>
            <person name="Weinstock G.M."/>
            <person name="Weissenbach J."/>
            <person name="Williams S.M."/>
            <person name="Woodage T."/>
            <person name="Worley K.C."/>
            <person name="Wu D."/>
            <person name="Yang S."/>
            <person name="Yao Q.A."/>
            <person name="Ye J."/>
            <person name="Yeh R.-F."/>
            <person name="Zaveri J.S."/>
            <person name="Zhan M."/>
            <person name="Zhang G."/>
            <person name="Zhao Q."/>
            <person name="Zheng L."/>
            <person name="Zheng X.H."/>
            <person name="Zhong F.N."/>
            <person name="Zhong W."/>
            <person name="Zhou X."/>
            <person name="Zhu S.C."/>
            <person name="Zhu X."/>
            <person name="Smith H.O."/>
            <person name="Gibbs R.A."/>
            <person name="Myers E.W."/>
            <person name="Rubin G.M."/>
            <person name="Venter J.C."/>
        </authorList>
    </citation>
    <scope>NUCLEOTIDE SEQUENCE [LARGE SCALE GENOMIC DNA]</scope>
    <source>
        <strain>Berkeley</strain>
    </source>
</reference>
<reference key="2">
    <citation type="journal article" date="2002" name="Genome Biol.">
        <title>Annotation of the Drosophila melanogaster euchromatic genome: a systematic review.</title>
        <authorList>
            <person name="Misra S."/>
            <person name="Crosby M.A."/>
            <person name="Mungall C.J."/>
            <person name="Matthews B.B."/>
            <person name="Campbell K.S."/>
            <person name="Hradecky P."/>
            <person name="Huang Y."/>
            <person name="Kaminker J.S."/>
            <person name="Millburn G.H."/>
            <person name="Prochnik S.E."/>
            <person name="Smith C.D."/>
            <person name="Tupy J.L."/>
            <person name="Whitfield E.J."/>
            <person name="Bayraktaroglu L."/>
            <person name="Berman B.P."/>
            <person name="Bettencourt B.R."/>
            <person name="Celniker S.E."/>
            <person name="de Grey A.D.N.J."/>
            <person name="Drysdale R.A."/>
            <person name="Harris N.L."/>
            <person name="Richter J."/>
            <person name="Russo S."/>
            <person name="Schroeder A.J."/>
            <person name="Shu S.Q."/>
            <person name="Stapleton M."/>
            <person name="Yamada C."/>
            <person name="Ashburner M."/>
            <person name="Gelbart W.M."/>
            <person name="Rubin G.M."/>
            <person name="Lewis S.E."/>
        </authorList>
    </citation>
    <scope>GENOME REANNOTATION</scope>
    <source>
        <strain>Berkeley</strain>
    </source>
</reference>
<reference key="3">
    <citation type="journal article" date="2002" name="Genome Biol.">
        <title>A Drosophila full-length cDNA resource.</title>
        <authorList>
            <person name="Stapleton M."/>
            <person name="Carlson J.W."/>
            <person name="Brokstein P."/>
            <person name="Yu C."/>
            <person name="Champe M."/>
            <person name="George R.A."/>
            <person name="Guarin H."/>
            <person name="Kronmiller B."/>
            <person name="Pacleb J.M."/>
            <person name="Park S."/>
            <person name="Wan K.H."/>
            <person name="Rubin G.M."/>
            <person name="Celniker S.E."/>
        </authorList>
    </citation>
    <scope>NUCLEOTIDE SEQUENCE [LARGE SCALE MRNA]</scope>
    <source>
        <strain>Berkeley</strain>
        <tissue>Head</tissue>
    </source>
</reference>
<reference key="4">
    <citation type="journal article" date="2008" name="J. Proteome Res.">
        <title>Phosphoproteome analysis of Drosophila melanogaster embryos.</title>
        <authorList>
            <person name="Zhai B."/>
            <person name="Villen J."/>
            <person name="Beausoleil S.A."/>
            <person name="Mintseris J."/>
            <person name="Gygi S.P."/>
        </authorList>
    </citation>
    <scope>PHOSPHORYLATION [LARGE SCALE ANALYSIS] AT TYR-115 AND SER-116</scope>
    <scope>IDENTIFICATION BY MASS SPECTROMETRY</scope>
    <source>
        <tissue>Embryo</tissue>
    </source>
</reference>
<organism>
    <name type="scientific">Drosophila melanogaster</name>
    <name type="common">Fruit fly</name>
    <dbReference type="NCBI Taxonomy" id="7227"/>
    <lineage>
        <taxon>Eukaryota</taxon>
        <taxon>Metazoa</taxon>
        <taxon>Ecdysozoa</taxon>
        <taxon>Arthropoda</taxon>
        <taxon>Hexapoda</taxon>
        <taxon>Insecta</taxon>
        <taxon>Pterygota</taxon>
        <taxon>Neoptera</taxon>
        <taxon>Endopterygota</taxon>
        <taxon>Diptera</taxon>
        <taxon>Brachycera</taxon>
        <taxon>Muscomorpha</taxon>
        <taxon>Ephydroidea</taxon>
        <taxon>Drosophilidae</taxon>
        <taxon>Drosophila</taxon>
        <taxon>Sophophora</taxon>
    </lineage>
</organism>
<keyword id="KW-0238">DNA-binding</keyword>
<keyword id="KW-0479">Metal-binding</keyword>
<keyword id="KW-0539">Nucleus</keyword>
<keyword id="KW-0597">Phosphoprotein</keyword>
<keyword id="KW-1185">Reference proteome</keyword>
<keyword id="KW-0677">Repeat</keyword>
<keyword id="KW-0804">Transcription</keyword>
<keyword id="KW-0805">Transcription regulation</keyword>
<keyword id="KW-0862">Zinc</keyword>
<keyword id="KW-0863">Zinc-finger</keyword>
<evidence type="ECO:0000250" key="1"/>
<evidence type="ECO:0000255" key="2">
    <source>
        <dbReference type="PROSITE-ProRule" id="PRU00042"/>
    </source>
</evidence>
<evidence type="ECO:0000269" key="3">
    <source>
    </source>
</evidence>